<name>SECA_CERS1</name>
<accession>A3PNL7</accession>
<keyword id="KW-0067">ATP-binding</keyword>
<keyword id="KW-0997">Cell inner membrane</keyword>
<keyword id="KW-1003">Cell membrane</keyword>
<keyword id="KW-0963">Cytoplasm</keyword>
<keyword id="KW-0472">Membrane</keyword>
<keyword id="KW-0479">Metal-binding</keyword>
<keyword id="KW-0547">Nucleotide-binding</keyword>
<keyword id="KW-0653">Protein transport</keyword>
<keyword id="KW-1278">Translocase</keyword>
<keyword id="KW-0811">Translocation</keyword>
<keyword id="KW-0813">Transport</keyword>
<keyword id="KW-0862">Zinc</keyword>
<gene>
    <name evidence="1" type="primary">secA</name>
    <name type="ordered locus">Rsph17029_2831</name>
</gene>
<sequence length="908" mass="101462">MLGLGTLARKIFGTPNDRKVKSVRSLVARINDLEPEFQALSDEGIKQKTAEFQRRVQEGGESLDDLLPEAFANCREGARRALGLRAFDVQLMGGIFLHQGNIAEMKTGEGKTLVATFPAYLNALAGKGVHVVTVNDYLAKRDAEWMGKVYAQLGLATGVVYPFQSDEEKKAAYAADITYATNNELGFDYLRDNMKASKEEMRQRGHFFAIVDEVDSILIDEARTPLIISGPSQDRSDLYTKVDKLIPELVEEHYKLDEKTRNVTFTEEGNEFLEKRLLETGLLPEGQSLYDPESTTIVHHVNQGLRAHKLFNRDQQYIVRDDEIMLIDEFTGRMMRGRRLSDGLHQAIEAKEGVSIQPENVTLASVTFQNYFRLYEKLGGMTGTAATEAEEFMEIYGLGVVEVPTNRPVARADEHDAVYRTAREKHDGIVASIKDAHERGQPILVGTTSIDKSEALSDLLKAAGIPHNVLNARQHEQEAQIVADAGKLGAVTIATNMAGRGTDIQLGGNVEMKVMQALAADPTAHPDEVRARIEAEHAEEKERVKEAGGLFVLGTERHESRRIDNQLRGRSGRQGDPGRSAFFLSLEDDLMRIFGSDRLDKVLSTLGMKEGEAIVHPWVNKSLEKAQAKVEARNFDIRKQLLKFDDVMNDQRKAIFSQRLEIMETEDLSEIAQDMRYQVIDDLIDQHMPPRSYADQWDIEGMHRAVQDKLGLDAPLAKWAQEEGVDLDVVRERLCEASDRQMTEKAEAFGPETMRSIEKQILLQTIDAKWREHLLTLEHLRSVVGFRGYAQRDPLSEYKTEAFALFESMLNSLRQDVTQKLAQVRPLSEEEQQAMMRQFLDQQRAAAAAEAPVAPAPQPAAAAPQPTPELVGAEAGEPDPAAWGNVARNDPCPCGSGLKYKHCHGRLD</sequence>
<feature type="chain" id="PRO_1000073492" description="Protein translocase subunit SecA">
    <location>
        <begin position="1"/>
        <end position="908"/>
    </location>
</feature>
<feature type="region of interest" description="Disordered" evidence="2">
    <location>
        <begin position="846"/>
        <end position="884"/>
    </location>
</feature>
<feature type="compositionally biased region" description="Low complexity" evidence="2">
    <location>
        <begin position="846"/>
        <end position="864"/>
    </location>
</feature>
<feature type="binding site" evidence="1">
    <location>
        <position position="90"/>
    </location>
    <ligand>
        <name>ATP</name>
        <dbReference type="ChEBI" id="CHEBI:30616"/>
    </ligand>
</feature>
<feature type="binding site" evidence="1">
    <location>
        <begin position="108"/>
        <end position="112"/>
    </location>
    <ligand>
        <name>ATP</name>
        <dbReference type="ChEBI" id="CHEBI:30616"/>
    </ligand>
</feature>
<feature type="binding site" evidence="1">
    <location>
        <position position="503"/>
    </location>
    <ligand>
        <name>ATP</name>
        <dbReference type="ChEBI" id="CHEBI:30616"/>
    </ligand>
</feature>
<feature type="binding site" evidence="1">
    <location>
        <position position="892"/>
    </location>
    <ligand>
        <name>Zn(2+)</name>
        <dbReference type="ChEBI" id="CHEBI:29105"/>
    </ligand>
</feature>
<feature type="binding site" evidence="1">
    <location>
        <position position="894"/>
    </location>
    <ligand>
        <name>Zn(2+)</name>
        <dbReference type="ChEBI" id="CHEBI:29105"/>
    </ligand>
</feature>
<feature type="binding site" evidence="1">
    <location>
        <position position="903"/>
    </location>
    <ligand>
        <name>Zn(2+)</name>
        <dbReference type="ChEBI" id="CHEBI:29105"/>
    </ligand>
</feature>
<feature type="binding site" evidence="1">
    <location>
        <position position="904"/>
    </location>
    <ligand>
        <name>Zn(2+)</name>
        <dbReference type="ChEBI" id="CHEBI:29105"/>
    </ligand>
</feature>
<protein>
    <recommendedName>
        <fullName evidence="1">Protein translocase subunit SecA</fullName>
        <ecNumber evidence="1">7.4.2.8</ecNumber>
    </recommendedName>
</protein>
<evidence type="ECO:0000255" key="1">
    <source>
        <dbReference type="HAMAP-Rule" id="MF_01382"/>
    </source>
</evidence>
<evidence type="ECO:0000256" key="2">
    <source>
        <dbReference type="SAM" id="MobiDB-lite"/>
    </source>
</evidence>
<reference key="1">
    <citation type="submission" date="2007-02" db="EMBL/GenBank/DDBJ databases">
        <title>Complete sequence of chromosome 1 of Rhodobacter sphaeroides ATCC 17029.</title>
        <authorList>
            <person name="Copeland A."/>
            <person name="Lucas S."/>
            <person name="Lapidus A."/>
            <person name="Barry K."/>
            <person name="Detter J.C."/>
            <person name="Glavina del Rio T."/>
            <person name="Hammon N."/>
            <person name="Israni S."/>
            <person name="Dalin E."/>
            <person name="Tice H."/>
            <person name="Pitluck S."/>
            <person name="Kiss H."/>
            <person name="Brettin T."/>
            <person name="Bruce D."/>
            <person name="Han C."/>
            <person name="Tapia R."/>
            <person name="Gilna P."/>
            <person name="Schmutz J."/>
            <person name="Larimer F."/>
            <person name="Land M."/>
            <person name="Hauser L."/>
            <person name="Kyrpides N."/>
            <person name="Mikhailova N."/>
            <person name="Richardson P."/>
            <person name="Mackenzie C."/>
            <person name="Choudhary M."/>
            <person name="Donohue T.J."/>
            <person name="Kaplan S."/>
        </authorList>
    </citation>
    <scope>NUCLEOTIDE SEQUENCE [LARGE SCALE GENOMIC DNA]</scope>
    <source>
        <strain>ATCC 17029 / ATH 2.4.9</strain>
    </source>
</reference>
<comment type="function">
    <text evidence="1">Part of the Sec protein translocase complex. Interacts with the SecYEG preprotein conducting channel. Has a central role in coupling the hydrolysis of ATP to the transfer of proteins into and across the cell membrane, serving both as a receptor for the preprotein-SecB complex and as an ATP-driven molecular motor driving the stepwise translocation of polypeptide chains across the membrane.</text>
</comment>
<comment type="catalytic activity">
    <reaction evidence="1">
        <text>ATP + H2O + cellular proteinSide 1 = ADP + phosphate + cellular proteinSide 2.</text>
        <dbReference type="EC" id="7.4.2.8"/>
    </reaction>
</comment>
<comment type="cofactor">
    <cofactor evidence="1">
        <name>Zn(2+)</name>
        <dbReference type="ChEBI" id="CHEBI:29105"/>
    </cofactor>
    <text evidence="1">May bind 1 zinc ion per subunit.</text>
</comment>
<comment type="subunit">
    <text evidence="1">Monomer and homodimer. Part of the essential Sec protein translocation apparatus which comprises SecA, SecYEG and auxiliary proteins SecDF-YajC and YidC.</text>
</comment>
<comment type="subcellular location">
    <subcellularLocation>
        <location evidence="1">Cell inner membrane</location>
        <topology evidence="1">Peripheral membrane protein</topology>
        <orientation evidence="1">Cytoplasmic side</orientation>
    </subcellularLocation>
    <subcellularLocation>
        <location evidence="1">Cytoplasm</location>
    </subcellularLocation>
    <text evidence="1">Distribution is 50-50.</text>
</comment>
<comment type="similarity">
    <text evidence="1">Belongs to the SecA family.</text>
</comment>
<dbReference type="EC" id="7.4.2.8" evidence="1"/>
<dbReference type="EMBL" id="CP000577">
    <property type="protein sequence ID" value="ABN77933.1"/>
    <property type="molecule type" value="Genomic_DNA"/>
</dbReference>
<dbReference type="RefSeq" id="WP_011841906.1">
    <property type="nucleotide sequence ID" value="NC_009049.1"/>
</dbReference>
<dbReference type="SMR" id="A3PNL7"/>
<dbReference type="KEGG" id="rsh:Rsph17029_2831"/>
<dbReference type="HOGENOM" id="CLU_005314_3_0_5"/>
<dbReference type="GO" id="GO:0031522">
    <property type="term" value="C:cell envelope Sec protein transport complex"/>
    <property type="evidence" value="ECO:0007669"/>
    <property type="project" value="TreeGrafter"/>
</dbReference>
<dbReference type="GO" id="GO:0005829">
    <property type="term" value="C:cytosol"/>
    <property type="evidence" value="ECO:0007669"/>
    <property type="project" value="TreeGrafter"/>
</dbReference>
<dbReference type="GO" id="GO:0005886">
    <property type="term" value="C:plasma membrane"/>
    <property type="evidence" value="ECO:0007669"/>
    <property type="project" value="UniProtKB-SubCell"/>
</dbReference>
<dbReference type="GO" id="GO:0005524">
    <property type="term" value="F:ATP binding"/>
    <property type="evidence" value="ECO:0007669"/>
    <property type="project" value="UniProtKB-UniRule"/>
</dbReference>
<dbReference type="GO" id="GO:0046872">
    <property type="term" value="F:metal ion binding"/>
    <property type="evidence" value="ECO:0007669"/>
    <property type="project" value="UniProtKB-KW"/>
</dbReference>
<dbReference type="GO" id="GO:0008564">
    <property type="term" value="F:protein-exporting ATPase activity"/>
    <property type="evidence" value="ECO:0007669"/>
    <property type="project" value="UniProtKB-EC"/>
</dbReference>
<dbReference type="GO" id="GO:0065002">
    <property type="term" value="P:intracellular protein transmembrane transport"/>
    <property type="evidence" value="ECO:0007669"/>
    <property type="project" value="UniProtKB-UniRule"/>
</dbReference>
<dbReference type="GO" id="GO:0017038">
    <property type="term" value="P:protein import"/>
    <property type="evidence" value="ECO:0007669"/>
    <property type="project" value="InterPro"/>
</dbReference>
<dbReference type="GO" id="GO:0006605">
    <property type="term" value="P:protein targeting"/>
    <property type="evidence" value="ECO:0007669"/>
    <property type="project" value="UniProtKB-UniRule"/>
</dbReference>
<dbReference type="GO" id="GO:0043952">
    <property type="term" value="P:protein transport by the Sec complex"/>
    <property type="evidence" value="ECO:0007669"/>
    <property type="project" value="TreeGrafter"/>
</dbReference>
<dbReference type="CDD" id="cd17928">
    <property type="entry name" value="DEXDc_SecA"/>
    <property type="match status" value="1"/>
</dbReference>
<dbReference type="CDD" id="cd18803">
    <property type="entry name" value="SF2_C_secA"/>
    <property type="match status" value="1"/>
</dbReference>
<dbReference type="FunFam" id="3.40.50.300:FF:000113">
    <property type="entry name" value="Preprotein translocase subunit SecA"/>
    <property type="match status" value="1"/>
</dbReference>
<dbReference type="FunFam" id="3.90.1440.10:FF:000001">
    <property type="entry name" value="Preprotein translocase subunit SecA"/>
    <property type="match status" value="1"/>
</dbReference>
<dbReference type="FunFam" id="1.10.3060.10:FF:000003">
    <property type="entry name" value="Protein translocase subunit SecA"/>
    <property type="match status" value="1"/>
</dbReference>
<dbReference type="Gene3D" id="1.10.3060.10">
    <property type="entry name" value="Helical scaffold and wing domains of SecA"/>
    <property type="match status" value="1"/>
</dbReference>
<dbReference type="Gene3D" id="3.40.50.300">
    <property type="entry name" value="P-loop containing nucleotide triphosphate hydrolases"/>
    <property type="match status" value="2"/>
</dbReference>
<dbReference type="Gene3D" id="3.90.1440.10">
    <property type="entry name" value="SecA, preprotein cross-linking domain"/>
    <property type="match status" value="1"/>
</dbReference>
<dbReference type="HAMAP" id="MF_01382">
    <property type="entry name" value="SecA"/>
    <property type="match status" value="1"/>
</dbReference>
<dbReference type="InterPro" id="IPR014001">
    <property type="entry name" value="Helicase_ATP-bd"/>
</dbReference>
<dbReference type="InterPro" id="IPR001650">
    <property type="entry name" value="Helicase_C-like"/>
</dbReference>
<dbReference type="InterPro" id="IPR027417">
    <property type="entry name" value="P-loop_NTPase"/>
</dbReference>
<dbReference type="InterPro" id="IPR004027">
    <property type="entry name" value="SEC_C_motif"/>
</dbReference>
<dbReference type="InterPro" id="IPR000185">
    <property type="entry name" value="SecA"/>
</dbReference>
<dbReference type="InterPro" id="IPR020937">
    <property type="entry name" value="SecA_CS"/>
</dbReference>
<dbReference type="InterPro" id="IPR011115">
    <property type="entry name" value="SecA_DEAD"/>
</dbReference>
<dbReference type="InterPro" id="IPR014018">
    <property type="entry name" value="SecA_motor_DEAD"/>
</dbReference>
<dbReference type="InterPro" id="IPR011130">
    <property type="entry name" value="SecA_preprotein_X-link_dom"/>
</dbReference>
<dbReference type="InterPro" id="IPR044722">
    <property type="entry name" value="SecA_SF2_C"/>
</dbReference>
<dbReference type="InterPro" id="IPR011116">
    <property type="entry name" value="SecA_Wing/Scaffold"/>
</dbReference>
<dbReference type="InterPro" id="IPR036266">
    <property type="entry name" value="SecA_Wing/Scaffold_sf"/>
</dbReference>
<dbReference type="InterPro" id="IPR036670">
    <property type="entry name" value="SecA_X-link_sf"/>
</dbReference>
<dbReference type="NCBIfam" id="NF009538">
    <property type="entry name" value="PRK12904.1"/>
    <property type="match status" value="1"/>
</dbReference>
<dbReference type="NCBIfam" id="TIGR00963">
    <property type="entry name" value="secA"/>
    <property type="match status" value="1"/>
</dbReference>
<dbReference type="PANTHER" id="PTHR30612:SF0">
    <property type="entry name" value="CHLOROPLAST PROTEIN-TRANSPORTING ATPASE"/>
    <property type="match status" value="1"/>
</dbReference>
<dbReference type="PANTHER" id="PTHR30612">
    <property type="entry name" value="SECA INNER MEMBRANE COMPONENT OF SEC PROTEIN SECRETION SYSTEM"/>
    <property type="match status" value="1"/>
</dbReference>
<dbReference type="Pfam" id="PF21090">
    <property type="entry name" value="P-loop_SecA"/>
    <property type="match status" value="1"/>
</dbReference>
<dbReference type="Pfam" id="PF02810">
    <property type="entry name" value="SEC-C"/>
    <property type="match status" value="1"/>
</dbReference>
<dbReference type="Pfam" id="PF07517">
    <property type="entry name" value="SecA_DEAD"/>
    <property type="match status" value="1"/>
</dbReference>
<dbReference type="Pfam" id="PF01043">
    <property type="entry name" value="SecA_PP_bind"/>
    <property type="match status" value="1"/>
</dbReference>
<dbReference type="Pfam" id="PF07516">
    <property type="entry name" value="SecA_SW"/>
    <property type="match status" value="1"/>
</dbReference>
<dbReference type="PRINTS" id="PR00906">
    <property type="entry name" value="SECA"/>
</dbReference>
<dbReference type="SMART" id="SM00957">
    <property type="entry name" value="SecA_DEAD"/>
    <property type="match status" value="1"/>
</dbReference>
<dbReference type="SMART" id="SM00958">
    <property type="entry name" value="SecA_PP_bind"/>
    <property type="match status" value="1"/>
</dbReference>
<dbReference type="SUPFAM" id="SSF81886">
    <property type="entry name" value="Helical scaffold and wing domains of SecA"/>
    <property type="match status" value="1"/>
</dbReference>
<dbReference type="SUPFAM" id="SSF52540">
    <property type="entry name" value="P-loop containing nucleoside triphosphate hydrolases"/>
    <property type="match status" value="2"/>
</dbReference>
<dbReference type="SUPFAM" id="SSF81767">
    <property type="entry name" value="Pre-protein crosslinking domain of SecA"/>
    <property type="match status" value="1"/>
</dbReference>
<dbReference type="PROSITE" id="PS01312">
    <property type="entry name" value="SECA"/>
    <property type="match status" value="1"/>
</dbReference>
<dbReference type="PROSITE" id="PS51196">
    <property type="entry name" value="SECA_MOTOR_DEAD"/>
    <property type="match status" value="1"/>
</dbReference>
<organism>
    <name type="scientific">Cereibacter sphaeroides (strain ATCC 17029 / ATH 2.4.9)</name>
    <name type="common">Rhodobacter sphaeroides</name>
    <dbReference type="NCBI Taxonomy" id="349101"/>
    <lineage>
        <taxon>Bacteria</taxon>
        <taxon>Pseudomonadati</taxon>
        <taxon>Pseudomonadota</taxon>
        <taxon>Alphaproteobacteria</taxon>
        <taxon>Rhodobacterales</taxon>
        <taxon>Paracoccaceae</taxon>
        <taxon>Cereibacter</taxon>
    </lineage>
</organism>
<proteinExistence type="inferred from homology"/>